<comment type="function">
    <text evidence="1">Promotes RNA polymerase assembly. Latches the N- and C-terminal regions of the beta' subunit thereby facilitating its interaction with the beta and alpha subunits.</text>
</comment>
<comment type="catalytic activity">
    <reaction evidence="1">
        <text>RNA(n) + a ribonucleoside 5'-triphosphate = RNA(n+1) + diphosphate</text>
        <dbReference type="Rhea" id="RHEA:21248"/>
        <dbReference type="Rhea" id="RHEA-COMP:14527"/>
        <dbReference type="Rhea" id="RHEA-COMP:17342"/>
        <dbReference type="ChEBI" id="CHEBI:33019"/>
        <dbReference type="ChEBI" id="CHEBI:61557"/>
        <dbReference type="ChEBI" id="CHEBI:140395"/>
        <dbReference type="EC" id="2.7.7.6"/>
    </reaction>
</comment>
<comment type="subunit">
    <text evidence="1">The RNAP catalytic core consists of 2 alpha, 1 beta, 1 beta' and 1 omega subunit. When a sigma factor is associated with the core the holoenzyme is formed, which can initiate transcription.</text>
</comment>
<comment type="similarity">
    <text evidence="1">Belongs to the RNA polymerase subunit omega family.</text>
</comment>
<feature type="chain" id="PRO_1000121252" description="DNA-directed RNA polymerase subunit omega">
    <location>
        <begin position="1"/>
        <end position="69"/>
    </location>
</feature>
<protein>
    <recommendedName>
        <fullName evidence="1">DNA-directed RNA polymerase subunit omega</fullName>
        <shortName evidence="1">RNAP omega subunit</shortName>
        <ecNumber evidence="1">2.7.7.6</ecNumber>
    </recommendedName>
    <alternativeName>
        <fullName evidence="1">RNA polymerase omega subunit</fullName>
    </alternativeName>
    <alternativeName>
        <fullName evidence="1">Transcriptase subunit omega</fullName>
    </alternativeName>
</protein>
<reference key="1">
    <citation type="journal article" date="2006" name="Proc. Natl. Acad. Sci. U.S.A.">
        <title>Comparative genomics of the lactic acid bacteria.</title>
        <authorList>
            <person name="Makarova K.S."/>
            <person name="Slesarev A."/>
            <person name="Wolf Y.I."/>
            <person name="Sorokin A."/>
            <person name="Mirkin B."/>
            <person name="Koonin E.V."/>
            <person name="Pavlov A."/>
            <person name="Pavlova N."/>
            <person name="Karamychev V."/>
            <person name="Polouchine N."/>
            <person name="Shakhova V."/>
            <person name="Grigoriev I."/>
            <person name="Lou Y."/>
            <person name="Rohksar D."/>
            <person name="Lucas S."/>
            <person name="Huang K."/>
            <person name="Goodstein D.M."/>
            <person name="Hawkins T."/>
            <person name="Plengvidhya V."/>
            <person name="Welker D."/>
            <person name="Hughes J."/>
            <person name="Goh Y."/>
            <person name="Benson A."/>
            <person name="Baldwin K."/>
            <person name="Lee J.-H."/>
            <person name="Diaz-Muniz I."/>
            <person name="Dosti B."/>
            <person name="Smeianov V."/>
            <person name="Wechter W."/>
            <person name="Barabote R."/>
            <person name="Lorca G."/>
            <person name="Altermann E."/>
            <person name="Barrangou R."/>
            <person name="Ganesan B."/>
            <person name="Xie Y."/>
            <person name="Rawsthorne H."/>
            <person name="Tamir D."/>
            <person name="Parker C."/>
            <person name="Breidt F."/>
            <person name="Broadbent J.R."/>
            <person name="Hutkins R."/>
            <person name="O'Sullivan D."/>
            <person name="Steele J."/>
            <person name="Unlu G."/>
            <person name="Saier M.H. Jr."/>
            <person name="Klaenhammer T."/>
            <person name="Richardson P."/>
            <person name="Kozyavkin S."/>
            <person name="Weimer B.C."/>
            <person name="Mills D.A."/>
        </authorList>
    </citation>
    <scope>NUCLEOTIDE SEQUENCE [LARGE SCALE GENOMIC DNA]</scope>
    <source>
        <strain>ATCC 25745 / CCUG 21536 / LMG 10740 / 183-1w</strain>
    </source>
</reference>
<name>RPOZ_PEDPA</name>
<gene>
    <name evidence="1" type="primary">rpoZ</name>
    <name type="ordered locus">PEPE_0826</name>
</gene>
<dbReference type="EC" id="2.7.7.6" evidence="1"/>
<dbReference type="EMBL" id="CP000422">
    <property type="protein sequence ID" value="ABJ67886.1"/>
    <property type="molecule type" value="Genomic_DNA"/>
</dbReference>
<dbReference type="RefSeq" id="WP_002833554.1">
    <property type="nucleotide sequence ID" value="NC_008525.1"/>
</dbReference>
<dbReference type="SMR" id="Q03FY6"/>
<dbReference type="STRING" id="278197.PEPE_0826"/>
<dbReference type="GeneID" id="33061342"/>
<dbReference type="KEGG" id="ppe:PEPE_0826"/>
<dbReference type="eggNOG" id="COG1758">
    <property type="taxonomic scope" value="Bacteria"/>
</dbReference>
<dbReference type="HOGENOM" id="CLU_125406_6_0_9"/>
<dbReference type="OrthoDB" id="9815459at2"/>
<dbReference type="Proteomes" id="UP000000773">
    <property type="component" value="Chromosome"/>
</dbReference>
<dbReference type="GO" id="GO:0000428">
    <property type="term" value="C:DNA-directed RNA polymerase complex"/>
    <property type="evidence" value="ECO:0007669"/>
    <property type="project" value="UniProtKB-KW"/>
</dbReference>
<dbReference type="GO" id="GO:0003677">
    <property type="term" value="F:DNA binding"/>
    <property type="evidence" value="ECO:0007669"/>
    <property type="project" value="UniProtKB-UniRule"/>
</dbReference>
<dbReference type="GO" id="GO:0003899">
    <property type="term" value="F:DNA-directed RNA polymerase activity"/>
    <property type="evidence" value="ECO:0007669"/>
    <property type="project" value="UniProtKB-UniRule"/>
</dbReference>
<dbReference type="GO" id="GO:0006351">
    <property type="term" value="P:DNA-templated transcription"/>
    <property type="evidence" value="ECO:0007669"/>
    <property type="project" value="UniProtKB-UniRule"/>
</dbReference>
<dbReference type="Gene3D" id="3.90.940.10">
    <property type="match status" value="1"/>
</dbReference>
<dbReference type="HAMAP" id="MF_00366">
    <property type="entry name" value="RNApol_bact_RpoZ"/>
    <property type="match status" value="1"/>
</dbReference>
<dbReference type="InterPro" id="IPR003716">
    <property type="entry name" value="DNA-dir_RNA_pol_omega"/>
</dbReference>
<dbReference type="InterPro" id="IPR006110">
    <property type="entry name" value="Pol_omega/Rpo6/RPB6"/>
</dbReference>
<dbReference type="InterPro" id="IPR036161">
    <property type="entry name" value="RPB6/omega-like_sf"/>
</dbReference>
<dbReference type="NCBIfam" id="TIGR00690">
    <property type="entry name" value="rpoZ"/>
    <property type="match status" value="1"/>
</dbReference>
<dbReference type="PANTHER" id="PTHR34476">
    <property type="entry name" value="DNA-DIRECTED RNA POLYMERASE SUBUNIT OMEGA"/>
    <property type="match status" value="1"/>
</dbReference>
<dbReference type="PANTHER" id="PTHR34476:SF1">
    <property type="entry name" value="DNA-DIRECTED RNA POLYMERASE SUBUNIT OMEGA"/>
    <property type="match status" value="1"/>
</dbReference>
<dbReference type="Pfam" id="PF01192">
    <property type="entry name" value="RNA_pol_Rpb6"/>
    <property type="match status" value="1"/>
</dbReference>
<dbReference type="SMART" id="SM01409">
    <property type="entry name" value="RNA_pol_Rpb6"/>
    <property type="match status" value="1"/>
</dbReference>
<dbReference type="SUPFAM" id="SSF63562">
    <property type="entry name" value="RPB6/omega subunit-like"/>
    <property type="match status" value="1"/>
</dbReference>
<proteinExistence type="inferred from homology"/>
<sequence>MILYPSVDDLLERVDSRYSLIMLASKRAHQLDEGQPELLDKYTSQKNVGKALEEVVAGDVIIDPNEKDL</sequence>
<evidence type="ECO:0000255" key="1">
    <source>
        <dbReference type="HAMAP-Rule" id="MF_00366"/>
    </source>
</evidence>
<keyword id="KW-0240">DNA-directed RNA polymerase</keyword>
<keyword id="KW-0548">Nucleotidyltransferase</keyword>
<keyword id="KW-0804">Transcription</keyword>
<keyword id="KW-0808">Transferase</keyword>
<organism>
    <name type="scientific">Pediococcus pentosaceus (strain ATCC 25745 / CCUG 21536 / LMG 10740 / 183-1w)</name>
    <dbReference type="NCBI Taxonomy" id="278197"/>
    <lineage>
        <taxon>Bacteria</taxon>
        <taxon>Bacillati</taxon>
        <taxon>Bacillota</taxon>
        <taxon>Bacilli</taxon>
        <taxon>Lactobacillales</taxon>
        <taxon>Lactobacillaceae</taxon>
        <taxon>Pediococcus</taxon>
    </lineage>
</organism>
<accession>Q03FY6</accession>